<dbReference type="EC" id="2.7.7.56" evidence="1"/>
<dbReference type="EMBL" id="CP001001">
    <property type="protein sequence ID" value="ACB24927.1"/>
    <property type="molecule type" value="Genomic_DNA"/>
</dbReference>
<dbReference type="RefSeq" id="WP_012319894.1">
    <property type="nucleotide sequence ID" value="NC_010505.1"/>
</dbReference>
<dbReference type="SMR" id="B1M4N1"/>
<dbReference type="STRING" id="426355.Mrad2831_2943"/>
<dbReference type="GeneID" id="6138987"/>
<dbReference type="KEGG" id="mrd:Mrad2831_2943"/>
<dbReference type="eggNOG" id="COG0689">
    <property type="taxonomic scope" value="Bacteria"/>
</dbReference>
<dbReference type="HOGENOM" id="CLU_050858_0_0_5"/>
<dbReference type="OrthoDB" id="9802265at2"/>
<dbReference type="Proteomes" id="UP000006589">
    <property type="component" value="Chromosome"/>
</dbReference>
<dbReference type="GO" id="GO:0000175">
    <property type="term" value="F:3'-5'-RNA exonuclease activity"/>
    <property type="evidence" value="ECO:0007669"/>
    <property type="project" value="UniProtKB-UniRule"/>
</dbReference>
<dbReference type="GO" id="GO:0000049">
    <property type="term" value="F:tRNA binding"/>
    <property type="evidence" value="ECO:0007669"/>
    <property type="project" value="UniProtKB-UniRule"/>
</dbReference>
<dbReference type="GO" id="GO:0009022">
    <property type="term" value="F:tRNA nucleotidyltransferase activity"/>
    <property type="evidence" value="ECO:0007669"/>
    <property type="project" value="UniProtKB-UniRule"/>
</dbReference>
<dbReference type="GO" id="GO:0016075">
    <property type="term" value="P:rRNA catabolic process"/>
    <property type="evidence" value="ECO:0007669"/>
    <property type="project" value="UniProtKB-UniRule"/>
</dbReference>
<dbReference type="GO" id="GO:0006364">
    <property type="term" value="P:rRNA processing"/>
    <property type="evidence" value="ECO:0007669"/>
    <property type="project" value="UniProtKB-KW"/>
</dbReference>
<dbReference type="GO" id="GO:0008033">
    <property type="term" value="P:tRNA processing"/>
    <property type="evidence" value="ECO:0007669"/>
    <property type="project" value="UniProtKB-UniRule"/>
</dbReference>
<dbReference type="CDD" id="cd11362">
    <property type="entry name" value="RNase_PH_bact"/>
    <property type="match status" value="1"/>
</dbReference>
<dbReference type="FunFam" id="3.30.230.70:FF:000003">
    <property type="entry name" value="Ribonuclease PH"/>
    <property type="match status" value="1"/>
</dbReference>
<dbReference type="Gene3D" id="3.30.230.70">
    <property type="entry name" value="GHMP Kinase, N-terminal domain"/>
    <property type="match status" value="1"/>
</dbReference>
<dbReference type="HAMAP" id="MF_00564">
    <property type="entry name" value="RNase_PH"/>
    <property type="match status" value="1"/>
</dbReference>
<dbReference type="InterPro" id="IPR001247">
    <property type="entry name" value="ExoRNase_PH_dom1"/>
</dbReference>
<dbReference type="InterPro" id="IPR015847">
    <property type="entry name" value="ExoRNase_PH_dom2"/>
</dbReference>
<dbReference type="InterPro" id="IPR036345">
    <property type="entry name" value="ExoRNase_PH_dom2_sf"/>
</dbReference>
<dbReference type="InterPro" id="IPR027408">
    <property type="entry name" value="PNPase/RNase_PH_dom_sf"/>
</dbReference>
<dbReference type="InterPro" id="IPR020568">
    <property type="entry name" value="Ribosomal_Su5_D2-typ_SF"/>
</dbReference>
<dbReference type="InterPro" id="IPR050080">
    <property type="entry name" value="RNase_PH"/>
</dbReference>
<dbReference type="InterPro" id="IPR002381">
    <property type="entry name" value="RNase_PH_bac-type"/>
</dbReference>
<dbReference type="InterPro" id="IPR018336">
    <property type="entry name" value="RNase_PH_CS"/>
</dbReference>
<dbReference type="NCBIfam" id="TIGR01966">
    <property type="entry name" value="RNasePH"/>
    <property type="match status" value="1"/>
</dbReference>
<dbReference type="PANTHER" id="PTHR11953">
    <property type="entry name" value="EXOSOME COMPLEX COMPONENT"/>
    <property type="match status" value="1"/>
</dbReference>
<dbReference type="PANTHER" id="PTHR11953:SF0">
    <property type="entry name" value="EXOSOME COMPLEX COMPONENT RRP41"/>
    <property type="match status" value="1"/>
</dbReference>
<dbReference type="Pfam" id="PF01138">
    <property type="entry name" value="RNase_PH"/>
    <property type="match status" value="1"/>
</dbReference>
<dbReference type="Pfam" id="PF03725">
    <property type="entry name" value="RNase_PH_C"/>
    <property type="match status" value="1"/>
</dbReference>
<dbReference type="SUPFAM" id="SSF55666">
    <property type="entry name" value="Ribonuclease PH domain 2-like"/>
    <property type="match status" value="1"/>
</dbReference>
<dbReference type="SUPFAM" id="SSF54211">
    <property type="entry name" value="Ribosomal protein S5 domain 2-like"/>
    <property type="match status" value="1"/>
</dbReference>
<dbReference type="PROSITE" id="PS01277">
    <property type="entry name" value="RIBONUCLEASE_PH"/>
    <property type="match status" value="1"/>
</dbReference>
<comment type="function">
    <text evidence="1">Phosphorolytic 3'-5' exoribonuclease that plays an important role in tRNA 3'-end maturation. Removes nucleotide residues following the 3'-CCA terminus of tRNAs; can also add nucleotides to the ends of RNA molecules by using nucleoside diphosphates as substrates, but this may not be physiologically important. Probably plays a role in initiation of 16S rRNA degradation (leading to ribosome degradation) during starvation.</text>
</comment>
<comment type="catalytic activity">
    <reaction evidence="1">
        <text>tRNA(n+1) + phosphate = tRNA(n) + a ribonucleoside 5'-diphosphate</text>
        <dbReference type="Rhea" id="RHEA:10628"/>
        <dbReference type="Rhea" id="RHEA-COMP:17343"/>
        <dbReference type="Rhea" id="RHEA-COMP:17344"/>
        <dbReference type="ChEBI" id="CHEBI:43474"/>
        <dbReference type="ChEBI" id="CHEBI:57930"/>
        <dbReference type="ChEBI" id="CHEBI:173114"/>
        <dbReference type="EC" id="2.7.7.56"/>
    </reaction>
</comment>
<comment type="subunit">
    <text evidence="1">Homohexameric ring arranged as a trimer of dimers.</text>
</comment>
<comment type="similarity">
    <text evidence="1">Belongs to the RNase PH family.</text>
</comment>
<organism>
    <name type="scientific">Methylobacterium radiotolerans (strain ATCC 27329 / DSM 1819 / JCM 2831 / NBRC 15690 / NCIMB 10815 / 0-1)</name>
    <dbReference type="NCBI Taxonomy" id="426355"/>
    <lineage>
        <taxon>Bacteria</taxon>
        <taxon>Pseudomonadati</taxon>
        <taxon>Pseudomonadota</taxon>
        <taxon>Alphaproteobacteria</taxon>
        <taxon>Hyphomicrobiales</taxon>
        <taxon>Methylobacteriaceae</taxon>
        <taxon>Methylobacterium</taxon>
    </lineage>
</organism>
<protein>
    <recommendedName>
        <fullName evidence="1">Ribonuclease PH</fullName>
        <shortName evidence="1">RNase PH</shortName>
        <ecNumber evidence="1">2.7.7.56</ecNumber>
    </recommendedName>
    <alternativeName>
        <fullName evidence="1">tRNA nucleotidyltransferase</fullName>
    </alternativeName>
</protein>
<name>RNPH_METRJ</name>
<proteinExistence type="inferred from homology"/>
<gene>
    <name evidence="1" type="primary">rph</name>
    <name type="ordered locus">Mrad2831_2943</name>
</gene>
<evidence type="ECO:0000255" key="1">
    <source>
        <dbReference type="HAMAP-Rule" id="MF_00564"/>
    </source>
</evidence>
<feature type="chain" id="PRO_1000129351" description="Ribonuclease PH">
    <location>
        <begin position="1"/>
        <end position="237"/>
    </location>
</feature>
<feature type="binding site" evidence="1">
    <location>
        <position position="86"/>
    </location>
    <ligand>
        <name>phosphate</name>
        <dbReference type="ChEBI" id="CHEBI:43474"/>
        <note>substrate</note>
    </ligand>
</feature>
<feature type="binding site" evidence="1">
    <location>
        <begin position="124"/>
        <end position="126"/>
    </location>
    <ligand>
        <name>phosphate</name>
        <dbReference type="ChEBI" id="CHEBI:43474"/>
        <note>substrate</note>
    </ligand>
</feature>
<sequence>MRPSKRAADELRPVSLERAVSRYAEGSCLVSFGNTRVLCTASLEERAPPWLRGSGKGWVTAEYAMLPRATHERTRREVGSGKPSGRTQEIQRLIGRSLRAVTNLPAMGERQITIDCDVIQADGGTRTAAITGAWVALHDCFAWMRTRSIISVDPLRDHVAAVSCGLYKGTPVLDLDYAEDSAAETDANFVLTGRGGIVEVQGTAEMEPFTQEQLLELLGLARAGTERLVALQKEAIA</sequence>
<accession>B1M4N1</accession>
<keyword id="KW-0548">Nucleotidyltransferase</keyword>
<keyword id="KW-0694">RNA-binding</keyword>
<keyword id="KW-0698">rRNA processing</keyword>
<keyword id="KW-0808">Transferase</keyword>
<keyword id="KW-0819">tRNA processing</keyword>
<keyword id="KW-0820">tRNA-binding</keyword>
<reference key="1">
    <citation type="submission" date="2008-03" db="EMBL/GenBank/DDBJ databases">
        <title>Complete sequence of chromosome of Methylobacterium radiotolerans JCM 2831.</title>
        <authorList>
            <consortium name="US DOE Joint Genome Institute"/>
            <person name="Copeland A."/>
            <person name="Lucas S."/>
            <person name="Lapidus A."/>
            <person name="Glavina del Rio T."/>
            <person name="Dalin E."/>
            <person name="Tice H."/>
            <person name="Bruce D."/>
            <person name="Goodwin L."/>
            <person name="Pitluck S."/>
            <person name="Kiss H."/>
            <person name="Brettin T."/>
            <person name="Detter J.C."/>
            <person name="Han C."/>
            <person name="Kuske C.R."/>
            <person name="Schmutz J."/>
            <person name="Larimer F."/>
            <person name="Land M."/>
            <person name="Hauser L."/>
            <person name="Kyrpides N."/>
            <person name="Mikhailova N."/>
            <person name="Marx C.J."/>
            <person name="Richardson P."/>
        </authorList>
    </citation>
    <scope>NUCLEOTIDE SEQUENCE [LARGE SCALE GENOMIC DNA]</scope>
    <source>
        <strain>ATCC 27329 / DSM 1819 / JCM 2831 / NBRC 15690 / NCIMB 10815 / 0-1</strain>
    </source>
</reference>